<comment type="subcellular location">
    <subcellularLocation>
        <location>Plastid</location>
        <location>Chloroplast</location>
    </subcellularLocation>
</comment>
<comment type="similarity">
    <text evidence="1">Belongs to the bacterial ribosomal protein bS16 family.</text>
</comment>
<accession>Q8MA02</accession>
<name>RR16_CHAGL</name>
<gene>
    <name evidence="1" type="primary">rps16</name>
</gene>
<geneLocation type="chloroplast"/>
<reference key="1">
    <citation type="journal article" date="2002" name="Proc. Natl. Acad. Sci. U.S.A.">
        <title>The chloroplast and mitochondrial genome sequences of the charophyte Chaetosphaeridium globosum: insights into the timing of the events that restructured organelle DNAs within the green algal lineage that led to land plants.</title>
        <authorList>
            <person name="Turmel M."/>
            <person name="Otis C."/>
            <person name="Lemieux C."/>
        </authorList>
    </citation>
    <scope>NUCLEOTIDE SEQUENCE [LARGE SCALE GENOMIC DNA]</scope>
    <source>
        <strain>M1311</strain>
    </source>
</reference>
<protein>
    <recommendedName>
        <fullName evidence="1">Small ribosomal subunit protein bS16c</fullName>
    </recommendedName>
    <alternativeName>
        <fullName evidence="2">30S ribosomal protein S16, chloroplastic</fullName>
    </alternativeName>
</protein>
<sequence>MVKLRLKRYGRKQQPTYRIIAIDAKNRREGKALKELGFYNPIKNSIQLDVQNIILFLKNGAKPTDTVFDILNKHQVFEQMKKE</sequence>
<evidence type="ECO:0000255" key="1">
    <source>
        <dbReference type="HAMAP-Rule" id="MF_00385"/>
    </source>
</evidence>
<evidence type="ECO:0000305" key="2"/>
<organism>
    <name type="scientific">Chaetosphaeridium globosum</name>
    <name type="common">Charophycean green alga</name>
    <name type="synonym">Herposteiron globosum</name>
    <dbReference type="NCBI Taxonomy" id="96477"/>
    <lineage>
        <taxon>Eukaryota</taxon>
        <taxon>Viridiplantae</taxon>
        <taxon>Streptophyta</taxon>
        <taxon>Coleochaetophyceae</taxon>
        <taxon>Coleochaetales</taxon>
        <taxon>Chaetosphaeridiaceae</taxon>
        <taxon>Chaetosphaeridium</taxon>
    </lineage>
</organism>
<dbReference type="EMBL" id="AF494278">
    <property type="protein sequence ID" value="AAM96572.1"/>
    <property type="molecule type" value="Genomic_DNA"/>
</dbReference>
<dbReference type="RefSeq" id="NP_683784.1">
    <property type="nucleotide sequence ID" value="NC_004115.1"/>
</dbReference>
<dbReference type="SMR" id="Q8MA02"/>
<dbReference type="GeneID" id="860728"/>
<dbReference type="GO" id="GO:0009507">
    <property type="term" value="C:chloroplast"/>
    <property type="evidence" value="ECO:0007669"/>
    <property type="project" value="UniProtKB-SubCell"/>
</dbReference>
<dbReference type="GO" id="GO:0005739">
    <property type="term" value="C:mitochondrion"/>
    <property type="evidence" value="ECO:0007669"/>
    <property type="project" value="GOC"/>
</dbReference>
<dbReference type="GO" id="GO:0015935">
    <property type="term" value="C:small ribosomal subunit"/>
    <property type="evidence" value="ECO:0007669"/>
    <property type="project" value="TreeGrafter"/>
</dbReference>
<dbReference type="GO" id="GO:0003735">
    <property type="term" value="F:structural constituent of ribosome"/>
    <property type="evidence" value="ECO:0007669"/>
    <property type="project" value="InterPro"/>
</dbReference>
<dbReference type="GO" id="GO:0032543">
    <property type="term" value="P:mitochondrial translation"/>
    <property type="evidence" value="ECO:0007669"/>
    <property type="project" value="TreeGrafter"/>
</dbReference>
<dbReference type="Gene3D" id="3.30.1320.10">
    <property type="match status" value="1"/>
</dbReference>
<dbReference type="HAMAP" id="MF_00385">
    <property type="entry name" value="Ribosomal_bS16"/>
    <property type="match status" value="1"/>
</dbReference>
<dbReference type="InterPro" id="IPR000307">
    <property type="entry name" value="Ribosomal_bS16"/>
</dbReference>
<dbReference type="InterPro" id="IPR020592">
    <property type="entry name" value="Ribosomal_bS16_CS"/>
</dbReference>
<dbReference type="InterPro" id="IPR023803">
    <property type="entry name" value="Ribosomal_bS16_dom_sf"/>
</dbReference>
<dbReference type="NCBIfam" id="TIGR00002">
    <property type="entry name" value="S16"/>
    <property type="match status" value="1"/>
</dbReference>
<dbReference type="PANTHER" id="PTHR12919">
    <property type="entry name" value="30S RIBOSOMAL PROTEIN S16"/>
    <property type="match status" value="1"/>
</dbReference>
<dbReference type="PANTHER" id="PTHR12919:SF20">
    <property type="entry name" value="SMALL RIBOSOMAL SUBUNIT PROTEIN BS16M"/>
    <property type="match status" value="1"/>
</dbReference>
<dbReference type="Pfam" id="PF00886">
    <property type="entry name" value="Ribosomal_S16"/>
    <property type="match status" value="1"/>
</dbReference>
<dbReference type="SUPFAM" id="SSF54565">
    <property type="entry name" value="Ribosomal protein S16"/>
    <property type="match status" value="1"/>
</dbReference>
<dbReference type="PROSITE" id="PS00732">
    <property type="entry name" value="RIBOSOMAL_S16"/>
    <property type="match status" value="1"/>
</dbReference>
<feature type="chain" id="PRO_0000167296" description="Small ribosomal subunit protein bS16c">
    <location>
        <begin position="1"/>
        <end position="83"/>
    </location>
</feature>
<keyword id="KW-0150">Chloroplast</keyword>
<keyword id="KW-0934">Plastid</keyword>
<keyword id="KW-0687">Ribonucleoprotein</keyword>
<keyword id="KW-0689">Ribosomal protein</keyword>
<proteinExistence type="inferred from homology"/>